<name>TACB2_TACTR</name>
<protein>
    <recommendedName>
        <fullName>Tachystatin-B2</fullName>
    </recommendedName>
</protein>
<evidence type="ECO:0000269" key="1">
    <source>
    </source>
</evidence>
<evidence type="ECO:0000269" key="2">
    <source>
    </source>
</evidence>
<evidence type="ECO:0007829" key="3">
    <source>
        <dbReference type="PDB" id="2DCW"/>
    </source>
</evidence>
<dbReference type="PDB" id="2DCW">
    <property type="method" value="NMR"/>
    <property type="chains" value="A=1-42"/>
</dbReference>
<dbReference type="PDBsum" id="2DCW"/>
<dbReference type="BMRB" id="P0C1Z9"/>
<dbReference type="SMR" id="P0C1Z9"/>
<dbReference type="EvolutionaryTrace" id="P0C1Z9"/>
<dbReference type="GO" id="GO:0005576">
    <property type="term" value="C:extracellular region"/>
    <property type="evidence" value="ECO:0007669"/>
    <property type="project" value="UniProtKB-SubCell"/>
</dbReference>
<dbReference type="GO" id="GO:0042742">
    <property type="term" value="P:defense response to bacterium"/>
    <property type="evidence" value="ECO:0007669"/>
    <property type="project" value="UniProtKB-KW"/>
</dbReference>
<dbReference type="GO" id="GO:0050832">
    <property type="term" value="P:defense response to fungus"/>
    <property type="evidence" value="ECO:0007669"/>
    <property type="project" value="UniProtKB-KW"/>
</dbReference>
<dbReference type="GO" id="GO:0031640">
    <property type="term" value="P:killing of cells of another organism"/>
    <property type="evidence" value="ECO:0007669"/>
    <property type="project" value="UniProtKB-KW"/>
</dbReference>
<dbReference type="Gene3D" id="4.10.40.20">
    <property type="match status" value="1"/>
</dbReference>
<dbReference type="InterPro" id="IPR020957">
    <property type="entry name" value="Tachystatin_B"/>
</dbReference>
<dbReference type="Pfam" id="PF11478">
    <property type="entry name" value="Tachystatin_B"/>
    <property type="match status" value="1"/>
</dbReference>
<organism>
    <name type="scientific">Tachypleus tridentatus</name>
    <name type="common">Japanese horseshoe crab</name>
    <dbReference type="NCBI Taxonomy" id="6853"/>
    <lineage>
        <taxon>Eukaryota</taxon>
        <taxon>Metazoa</taxon>
        <taxon>Ecdysozoa</taxon>
        <taxon>Arthropoda</taxon>
        <taxon>Chelicerata</taxon>
        <taxon>Merostomata</taxon>
        <taxon>Xiphosura</taxon>
        <taxon>Limulidae</taxon>
        <taxon>Tachypleus</taxon>
    </lineage>
</organism>
<feature type="peptide" id="PRO_0000256692" description="Tachystatin-B2">
    <location>
        <begin position="1"/>
        <end position="42"/>
    </location>
</feature>
<feature type="disulfide bond" evidence="2">
    <location>
        <begin position="4"/>
        <end position="20"/>
    </location>
</feature>
<feature type="disulfide bond" evidence="2">
    <location>
        <begin position="11"/>
        <end position="25"/>
    </location>
</feature>
<feature type="disulfide bond" evidence="2">
    <location>
        <begin position="19"/>
        <end position="37"/>
    </location>
</feature>
<feature type="strand" evidence="3">
    <location>
        <begin position="10"/>
        <end position="12"/>
    </location>
</feature>
<feature type="strand" evidence="3">
    <location>
        <begin position="23"/>
        <end position="29"/>
    </location>
</feature>
<feature type="strand" evidence="3">
    <location>
        <begin position="33"/>
        <end position="39"/>
    </location>
</feature>
<keyword id="KW-0002">3D-structure</keyword>
<keyword id="KW-0044">Antibiotic</keyword>
<keyword id="KW-0929">Antimicrobial</keyword>
<keyword id="KW-0903">Direct protein sequencing</keyword>
<keyword id="KW-1015">Disulfide bond</keyword>
<keyword id="KW-0295">Fungicide</keyword>
<keyword id="KW-0960">Knottin</keyword>
<keyword id="KW-0964">Secreted</keyword>
<proteinExistence type="evidence at protein level"/>
<accession>P0C1Z9</accession>
<reference key="1">
    <citation type="journal article" date="1999" name="J. Biol. Chem.">
        <title>Horseshoe crab hemocyte-derived antimicrobial polypeptides, tachystatins, with sequence similarity to spider neurotoxins.</title>
        <authorList>
            <person name="Osaki T."/>
            <person name="Omotezako M."/>
            <person name="Nagayama R."/>
            <person name="Hirata M."/>
            <person name="Iwanaga S."/>
            <person name="Kasahara J."/>
            <person name="Hattori J."/>
            <person name="Ito I."/>
            <person name="Sugiyama H."/>
            <person name="Kawabata S."/>
        </authorList>
    </citation>
    <scope>PROTEIN SEQUENCE</scope>
    <scope>TISSUE SPECIFICITY</scope>
</reference>
<reference key="2">
    <citation type="journal article" date="2007" name="J. Pept. Sci.">
        <title>The solution structure of horseshoe crab antimicrobial peptide tachystatin B with an inhibitory cystine-knot motif.</title>
        <authorList>
            <person name="Fujitani N."/>
            <person name="Kouno T."/>
            <person name="Nakahara T."/>
            <person name="Takaya K."/>
            <person name="Osaki T."/>
            <person name="Kawabata S."/>
            <person name="Mizuguchi M."/>
            <person name="Aizawa T."/>
            <person name="Demura M."/>
            <person name="Nishimura S."/>
            <person name="Kawano K."/>
        </authorList>
    </citation>
    <scope>STRUCTURE BY NMR</scope>
    <scope>DISULFIDE BONDS</scope>
</reference>
<comment type="function">
    <text>Exhibits stronger antimicrobial activity against the Gram-positive bacteria (S.aureus (IC(50) is 7.4 ug/ml)) and fungi (C.albicans (IC(50) is 3.0 ug/ml) and P.pastoris (IC(50) is 0.1 ug/ml)) than Gram-negative bacteria (E.coli no inhibition at 100 ug/ml). Binds to chitin (4.3 uM are required to obtain 50% of binding). Does not cause hemolysis on sheep erythrocytes. Has no blocking activity on the P-type calcium channel.</text>
</comment>
<comment type="subcellular location">
    <subcellularLocation>
        <location>Secreted</location>
    </subcellularLocation>
</comment>
<comment type="tissue specificity">
    <text evidence="1">Granular hemocytes, small secretory granules.</text>
</comment>
<comment type="domain">
    <text>The presence of a 'disulfide through disulfide knot' structurally defines this protein as a knottin.</text>
</comment>
<sequence length="42" mass="4947">YITCLFRGARCRVYSGRSCCFGYYCRRDFPGSIFGTCSRRNF</sequence>